<feature type="chain" id="PRO_0000060633" description="Cytochrome b">
    <location>
        <begin position="1"/>
        <end position="379"/>
    </location>
</feature>
<feature type="transmembrane region" description="Helical" evidence="2">
    <location>
        <begin position="33"/>
        <end position="53"/>
    </location>
</feature>
<feature type="transmembrane region" description="Helical" evidence="2">
    <location>
        <begin position="77"/>
        <end position="98"/>
    </location>
</feature>
<feature type="transmembrane region" description="Helical" evidence="2">
    <location>
        <begin position="113"/>
        <end position="133"/>
    </location>
</feature>
<feature type="transmembrane region" description="Helical" evidence="2">
    <location>
        <begin position="178"/>
        <end position="198"/>
    </location>
</feature>
<feature type="transmembrane region" description="Helical" evidence="2">
    <location>
        <begin position="226"/>
        <end position="246"/>
    </location>
</feature>
<feature type="transmembrane region" description="Helical" evidence="2">
    <location>
        <begin position="288"/>
        <end position="308"/>
    </location>
</feature>
<feature type="transmembrane region" description="Helical" evidence="2">
    <location>
        <begin position="320"/>
        <end position="340"/>
    </location>
</feature>
<feature type="transmembrane region" description="Helical" evidence="2">
    <location>
        <begin position="347"/>
        <end position="367"/>
    </location>
</feature>
<feature type="binding site" description="axial binding residue" evidence="2">
    <location>
        <position position="83"/>
    </location>
    <ligand>
        <name>heme b</name>
        <dbReference type="ChEBI" id="CHEBI:60344"/>
        <label>b562</label>
    </ligand>
    <ligandPart>
        <name>Fe</name>
        <dbReference type="ChEBI" id="CHEBI:18248"/>
    </ligandPart>
</feature>
<feature type="binding site" description="axial binding residue" evidence="2">
    <location>
        <position position="97"/>
    </location>
    <ligand>
        <name>heme b</name>
        <dbReference type="ChEBI" id="CHEBI:60344"/>
        <label>b566</label>
    </ligand>
    <ligandPart>
        <name>Fe</name>
        <dbReference type="ChEBI" id="CHEBI:18248"/>
    </ligandPart>
</feature>
<feature type="binding site" description="axial binding residue" evidence="2">
    <location>
        <position position="182"/>
    </location>
    <ligand>
        <name>heme b</name>
        <dbReference type="ChEBI" id="CHEBI:60344"/>
        <label>b562</label>
    </ligand>
    <ligandPart>
        <name>Fe</name>
        <dbReference type="ChEBI" id="CHEBI:18248"/>
    </ligandPart>
</feature>
<feature type="binding site" description="axial binding residue" evidence="2">
    <location>
        <position position="196"/>
    </location>
    <ligand>
        <name>heme b</name>
        <dbReference type="ChEBI" id="CHEBI:60344"/>
        <label>b566</label>
    </ligand>
    <ligandPart>
        <name>Fe</name>
        <dbReference type="ChEBI" id="CHEBI:18248"/>
    </ligandPart>
</feature>
<feature type="binding site" evidence="2">
    <location>
        <position position="201"/>
    </location>
    <ligand>
        <name>a ubiquinone</name>
        <dbReference type="ChEBI" id="CHEBI:16389"/>
    </ligand>
</feature>
<accession>Q95735</accession>
<sequence>MTNIRKTHPLLKIINSSFVDLPAPSSLSSWWNFGSLLGVCLGVQILTGLFLAMHYTSDTATAFNSVTHICRDVNYGWLLRYLHANGASMFFICLYLHVGRGLYYGSYTYSETWNIGILLLFAVMATAFMGYVLPWGQMSFWGATVITNLLSAIPYIGTDLVQWIWGGFSVDKATLTRFFAFHFLFPFIVTALVMVHLLFLHETGSNNPTGIPSDPDMIPFHPYYTIKDILGFLVMLTALATLVLFSPDLLGDPDNYIPANPLMTPPHIKPEWYFLFAYAILRSIPNKLGGVLALVMSILILAIVPILHMSKQRSMMFRPLSQCLFWLLVAVLFTLTWIGGQPVEHPYIIIGQMASVLYFLIILFLMPMISLVENYLLKW</sequence>
<organism>
    <name type="scientific">Artibeus hirsutus</name>
    <name type="common">Hairy fruit-eating bat</name>
    <dbReference type="NCBI Taxonomy" id="51012"/>
    <lineage>
        <taxon>Eukaryota</taxon>
        <taxon>Metazoa</taxon>
        <taxon>Chordata</taxon>
        <taxon>Craniata</taxon>
        <taxon>Vertebrata</taxon>
        <taxon>Euteleostomi</taxon>
        <taxon>Mammalia</taxon>
        <taxon>Eutheria</taxon>
        <taxon>Laurasiatheria</taxon>
        <taxon>Chiroptera</taxon>
        <taxon>Yangochiroptera</taxon>
        <taxon>Phyllostomidae</taxon>
        <taxon>Stenodermatinae</taxon>
        <taxon>Artibeus</taxon>
    </lineage>
</organism>
<reference key="1">
    <citation type="submission" date="1996-08" db="EMBL/GenBank/DDBJ databases">
        <title>Phylogenetic accuracy, stability, and congruence: relationships within and among the New World bat genera Artibeus, Dermanura, and Koopmania.</title>
        <authorList>
            <person name="den Bussche R.A."/>
            <person name="Hudgeons J.L."/>
            <person name="Baker R.J."/>
        </authorList>
    </citation>
    <scope>NUCLEOTIDE SEQUENCE [GENOMIC DNA]</scope>
    <source>
        <strain>Isolate NK 11128</strain>
    </source>
</reference>
<comment type="function">
    <text evidence="2">Component of the ubiquinol-cytochrome c reductase complex (complex III or cytochrome b-c1 complex) that is part of the mitochondrial respiratory chain. The b-c1 complex mediates electron transfer from ubiquinol to cytochrome c. Contributes to the generation of a proton gradient across the mitochondrial membrane that is then used for ATP synthesis.</text>
</comment>
<comment type="cofactor">
    <cofactor evidence="2">
        <name>heme b</name>
        <dbReference type="ChEBI" id="CHEBI:60344"/>
    </cofactor>
    <text evidence="2">Binds 2 heme b groups non-covalently.</text>
</comment>
<comment type="subunit">
    <text evidence="2">The cytochrome bc1 complex contains 11 subunits: 3 respiratory subunits (MT-CYB, CYC1 and UQCRFS1), 2 core proteins (UQCRC1 and UQCRC2) and 6 low-molecular weight proteins (UQCRH/QCR6, UQCRB/QCR7, UQCRQ/QCR8, UQCR10/QCR9, UQCR11/QCR10 and a cleavage product of UQCRFS1). This cytochrome bc1 complex then forms a dimer.</text>
</comment>
<comment type="subcellular location">
    <subcellularLocation>
        <location evidence="2">Mitochondrion inner membrane</location>
        <topology evidence="2">Multi-pass membrane protein</topology>
    </subcellularLocation>
</comment>
<comment type="miscellaneous">
    <text evidence="1">Heme 1 (or BL or b562) is low-potential and absorbs at about 562 nm, and heme 2 (or BH or b566) is high-potential and absorbs at about 566 nm.</text>
</comment>
<comment type="similarity">
    <text evidence="3 4">Belongs to the cytochrome b family.</text>
</comment>
<comment type="caution">
    <text evidence="2">The full-length protein contains only eight transmembrane helices, not nine as predicted by bioinformatics tools.</text>
</comment>
<keyword id="KW-0249">Electron transport</keyword>
<keyword id="KW-0349">Heme</keyword>
<keyword id="KW-0408">Iron</keyword>
<keyword id="KW-0472">Membrane</keyword>
<keyword id="KW-0479">Metal-binding</keyword>
<keyword id="KW-0496">Mitochondrion</keyword>
<keyword id="KW-0999">Mitochondrion inner membrane</keyword>
<keyword id="KW-0679">Respiratory chain</keyword>
<keyword id="KW-0812">Transmembrane</keyword>
<keyword id="KW-1133">Transmembrane helix</keyword>
<keyword id="KW-0813">Transport</keyword>
<keyword id="KW-0830">Ubiquinone</keyword>
<protein>
    <recommendedName>
        <fullName>Cytochrome b</fullName>
    </recommendedName>
    <alternativeName>
        <fullName>Complex III subunit 3</fullName>
    </alternativeName>
    <alternativeName>
        <fullName>Complex III subunit III</fullName>
    </alternativeName>
    <alternativeName>
        <fullName>Cytochrome b-c1 complex subunit 3</fullName>
    </alternativeName>
    <alternativeName>
        <fullName>Ubiquinol-cytochrome-c reductase complex cytochrome b subunit</fullName>
    </alternativeName>
</protein>
<geneLocation type="mitochondrion"/>
<dbReference type="EMBL" id="U66500">
    <property type="protein sequence ID" value="AAB06774.1"/>
    <property type="molecule type" value="Genomic_DNA"/>
</dbReference>
<dbReference type="SMR" id="Q95735"/>
<dbReference type="GO" id="GO:0005743">
    <property type="term" value="C:mitochondrial inner membrane"/>
    <property type="evidence" value="ECO:0007669"/>
    <property type="project" value="UniProtKB-SubCell"/>
</dbReference>
<dbReference type="GO" id="GO:0045275">
    <property type="term" value="C:respiratory chain complex III"/>
    <property type="evidence" value="ECO:0007669"/>
    <property type="project" value="InterPro"/>
</dbReference>
<dbReference type="GO" id="GO:0046872">
    <property type="term" value="F:metal ion binding"/>
    <property type="evidence" value="ECO:0007669"/>
    <property type="project" value="UniProtKB-KW"/>
</dbReference>
<dbReference type="GO" id="GO:0008121">
    <property type="term" value="F:ubiquinol-cytochrome-c reductase activity"/>
    <property type="evidence" value="ECO:0007669"/>
    <property type="project" value="InterPro"/>
</dbReference>
<dbReference type="GO" id="GO:0006122">
    <property type="term" value="P:mitochondrial electron transport, ubiquinol to cytochrome c"/>
    <property type="evidence" value="ECO:0007669"/>
    <property type="project" value="TreeGrafter"/>
</dbReference>
<dbReference type="CDD" id="cd00290">
    <property type="entry name" value="cytochrome_b_C"/>
    <property type="match status" value="1"/>
</dbReference>
<dbReference type="CDD" id="cd00284">
    <property type="entry name" value="Cytochrome_b_N"/>
    <property type="match status" value="1"/>
</dbReference>
<dbReference type="FunFam" id="1.20.810.10:FF:000002">
    <property type="entry name" value="Cytochrome b"/>
    <property type="match status" value="1"/>
</dbReference>
<dbReference type="Gene3D" id="1.20.810.10">
    <property type="entry name" value="Cytochrome Bc1 Complex, Chain C"/>
    <property type="match status" value="1"/>
</dbReference>
<dbReference type="InterPro" id="IPR005798">
    <property type="entry name" value="Cyt_b/b6_C"/>
</dbReference>
<dbReference type="InterPro" id="IPR036150">
    <property type="entry name" value="Cyt_b/b6_C_sf"/>
</dbReference>
<dbReference type="InterPro" id="IPR005797">
    <property type="entry name" value="Cyt_b/b6_N"/>
</dbReference>
<dbReference type="InterPro" id="IPR027387">
    <property type="entry name" value="Cytb/b6-like_sf"/>
</dbReference>
<dbReference type="InterPro" id="IPR030689">
    <property type="entry name" value="Cytochrome_b"/>
</dbReference>
<dbReference type="InterPro" id="IPR048260">
    <property type="entry name" value="Cytochrome_b_C_euk/bac"/>
</dbReference>
<dbReference type="InterPro" id="IPR048259">
    <property type="entry name" value="Cytochrome_b_N_euk/bac"/>
</dbReference>
<dbReference type="InterPro" id="IPR016174">
    <property type="entry name" value="Di-haem_cyt_TM"/>
</dbReference>
<dbReference type="PANTHER" id="PTHR19271">
    <property type="entry name" value="CYTOCHROME B"/>
    <property type="match status" value="1"/>
</dbReference>
<dbReference type="PANTHER" id="PTHR19271:SF16">
    <property type="entry name" value="CYTOCHROME B"/>
    <property type="match status" value="1"/>
</dbReference>
<dbReference type="Pfam" id="PF00032">
    <property type="entry name" value="Cytochrom_B_C"/>
    <property type="match status" value="1"/>
</dbReference>
<dbReference type="Pfam" id="PF00033">
    <property type="entry name" value="Cytochrome_B"/>
    <property type="match status" value="1"/>
</dbReference>
<dbReference type="PIRSF" id="PIRSF038885">
    <property type="entry name" value="COB"/>
    <property type="match status" value="1"/>
</dbReference>
<dbReference type="SUPFAM" id="SSF81648">
    <property type="entry name" value="a domain/subunit of cytochrome bc1 complex (Ubiquinol-cytochrome c reductase)"/>
    <property type="match status" value="1"/>
</dbReference>
<dbReference type="SUPFAM" id="SSF81342">
    <property type="entry name" value="Transmembrane di-heme cytochromes"/>
    <property type="match status" value="1"/>
</dbReference>
<dbReference type="PROSITE" id="PS51003">
    <property type="entry name" value="CYTB_CTER"/>
    <property type="match status" value="1"/>
</dbReference>
<dbReference type="PROSITE" id="PS51002">
    <property type="entry name" value="CYTB_NTER"/>
    <property type="match status" value="1"/>
</dbReference>
<gene>
    <name type="primary">MT-CYB</name>
    <name type="synonym">COB</name>
    <name type="synonym">CYTB</name>
    <name type="synonym">MTCYB</name>
</gene>
<proteinExistence type="inferred from homology"/>
<evidence type="ECO:0000250" key="1"/>
<evidence type="ECO:0000250" key="2">
    <source>
        <dbReference type="UniProtKB" id="P00157"/>
    </source>
</evidence>
<evidence type="ECO:0000255" key="3">
    <source>
        <dbReference type="PROSITE-ProRule" id="PRU00967"/>
    </source>
</evidence>
<evidence type="ECO:0000255" key="4">
    <source>
        <dbReference type="PROSITE-ProRule" id="PRU00968"/>
    </source>
</evidence>
<name>CYB_ARTHI</name>